<feature type="propeptide" id="PRO_0000271173" evidence="7">
    <location>
        <begin position="1"/>
        <end position="188"/>
    </location>
</feature>
<feature type="chain" id="PRO_0000271174" description="Retroviral-like aspartic protease 1" evidence="7">
    <location>
        <begin position="189"/>
        <end position="324"/>
    </location>
</feature>
<feature type="propeptide" id="PRO_0000271175" evidence="7">
    <location>
        <begin position="325"/>
        <end position="339"/>
    </location>
</feature>
<feature type="transmembrane region" description="Helical" evidence="2">
    <location>
        <begin position="55"/>
        <end position="75"/>
    </location>
</feature>
<feature type="domain" description="Peptidase A2" evidence="3">
    <location>
        <begin position="205"/>
        <end position="286"/>
    </location>
</feature>
<feature type="region of interest" description="Disordered" evidence="5">
    <location>
        <begin position="34"/>
        <end position="53"/>
    </location>
</feature>
<feature type="compositionally biased region" description="Polar residues" evidence="5">
    <location>
        <begin position="38"/>
        <end position="53"/>
    </location>
</feature>
<feature type="active site" evidence="4">
    <location>
        <position position="210"/>
    </location>
</feature>
<feature type="glycosylation site" description="N-linked (GlcNAc...) asparagine" evidence="2">
    <location>
        <position position="39"/>
    </location>
</feature>
<feature type="glycosylation site" description="N-linked (GlcNAc...) asparagine" evidence="2">
    <location>
        <position position="274"/>
    </location>
</feature>
<feature type="mutagenesis site" description="Abolishes production of active form of enzyme." evidence="7">
    <original>D</original>
    <variation>A</variation>
    <location>
        <position position="210"/>
    </location>
</feature>
<feature type="sequence conflict" description="In Ref. 3; AAI08358." evidence="9" ref="3">
    <original>G</original>
    <variation>E</variation>
    <location>
        <position position="331"/>
    </location>
</feature>
<protein>
    <recommendedName>
        <fullName>Retroviral-like aspartic protease 1</fullName>
        <ecNumber>3.4.23.-</ecNumber>
    </recommendedName>
    <alternativeName>
        <fullName>Skin-specific retroviral-like aspartic protease</fullName>
        <shortName>SASPase</shortName>
        <shortName>Skin aspartic protease</shortName>
    </alternativeName>
    <alternativeName>
        <fullName>TPA-inducible aspartic proteinase-like protein</fullName>
    </alternativeName>
</protein>
<dbReference type="EC" id="3.4.23.-"/>
<dbReference type="EMBL" id="DQ841260">
    <property type="protein sequence ID" value="ABI23689.1"/>
    <property type="molecule type" value="mRNA"/>
</dbReference>
<dbReference type="EMBL" id="BC057938">
    <property type="protein sequence ID" value="AAH57938.1"/>
    <property type="status" value="ALT_INIT"/>
    <property type="molecule type" value="mRNA"/>
</dbReference>
<dbReference type="EMBL" id="BC108357">
    <property type="protein sequence ID" value="AAI08358.1"/>
    <property type="molecule type" value="mRNA"/>
</dbReference>
<dbReference type="EMBL" id="BC119099">
    <property type="protein sequence ID" value="AAI19100.1"/>
    <property type="molecule type" value="mRNA"/>
</dbReference>
<dbReference type="EMBL" id="BC119101">
    <property type="protein sequence ID" value="AAI19102.1"/>
    <property type="molecule type" value="mRNA"/>
</dbReference>
<dbReference type="EMBL" id="AK004007">
    <property type="protein sequence ID" value="BAB23121.2"/>
    <property type="molecule type" value="mRNA"/>
</dbReference>
<dbReference type="RefSeq" id="NP_080690.2">
    <property type="nucleotide sequence ID" value="NM_026414.2"/>
</dbReference>
<dbReference type="SMR" id="Q09PK2"/>
<dbReference type="BioGRID" id="212483">
    <property type="interactions" value="4"/>
</dbReference>
<dbReference type="FunCoup" id="Q09PK2">
    <property type="interactions" value="580"/>
</dbReference>
<dbReference type="STRING" id="10090.ENSMUSP00000046121"/>
<dbReference type="MEROPS" id="A28.004"/>
<dbReference type="GlyCosmos" id="Q09PK2">
    <property type="glycosylation" value="2 sites, No reported glycans"/>
</dbReference>
<dbReference type="GlyGen" id="Q09PK2">
    <property type="glycosylation" value="2 sites"/>
</dbReference>
<dbReference type="PhosphoSitePlus" id="Q09PK2"/>
<dbReference type="PaxDb" id="10090-ENSMUSP00000046121"/>
<dbReference type="PeptideAtlas" id="Q09PK2"/>
<dbReference type="ProteomicsDB" id="296272"/>
<dbReference type="Antibodypedia" id="31062">
    <property type="antibodies" value="78 antibodies from 22 providers"/>
</dbReference>
<dbReference type="DNASU" id="67855"/>
<dbReference type="GeneID" id="67855"/>
<dbReference type="KEGG" id="mmu:67855"/>
<dbReference type="UCSC" id="uc009csf.1">
    <property type="organism name" value="mouse"/>
</dbReference>
<dbReference type="AGR" id="MGI:1915105"/>
<dbReference type="CTD" id="151516"/>
<dbReference type="MGI" id="MGI:1915105">
    <property type="gene designation" value="Asprv1"/>
</dbReference>
<dbReference type="VEuPathDB" id="HostDB:ENSMUSG00000033508"/>
<dbReference type="eggNOG" id="ENOG502SQVT">
    <property type="taxonomic scope" value="Eukaryota"/>
</dbReference>
<dbReference type="HOGENOM" id="CLU_846072_0_0_1"/>
<dbReference type="InParanoid" id="Q09PK2"/>
<dbReference type="PhylomeDB" id="Q09PK2"/>
<dbReference type="TreeFam" id="TF337956"/>
<dbReference type="BioGRID-ORCS" id="67855">
    <property type="hits" value="0 hits in 76 CRISPR screens"/>
</dbReference>
<dbReference type="ChiTaRS" id="Asprv1">
    <property type="organism name" value="mouse"/>
</dbReference>
<dbReference type="PRO" id="PR:Q09PK2"/>
<dbReference type="Proteomes" id="UP000000589">
    <property type="component" value="Chromosome 6"/>
</dbReference>
<dbReference type="RNAct" id="Q09PK2">
    <property type="molecule type" value="protein"/>
</dbReference>
<dbReference type="GO" id="GO:0016020">
    <property type="term" value="C:membrane"/>
    <property type="evidence" value="ECO:0000303"/>
    <property type="project" value="UniProtKB"/>
</dbReference>
<dbReference type="GO" id="GO:0004190">
    <property type="term" value="F:aspartic-type endopeptidase activity"/>
    <property type="evidence" value="ECO:0000314"/>
    <property type="project" value="UniProtKB"/>
</dbReference>
<dbReference type="GO" id="GO:0016485">
    <property type="term" value="P:protein processing"/>
    <property type="evidence" value="ECO:0000314"/>
    <property type="project" value="UniProtKB"/>
</dbReference>
<dbReference type="GO" id="GO:0043588">
    <property type="term" value="P:skin development"/>
    <property type="evidence" value="ECO:0000315"/>
    <property type="project" value="UniProtKB"/>
</dbReference>
<dbReference type="CDD" id="cd00303">
    <property type="entry name" value="retropepsin_like"/>
    <property type="match status" value="1"/>
</dbReference>
<dbReference type="FunFam" id="2.40.70.10:FF:000043">
    <property type="entry name" value="retroviral-like aspartic protease 1 isoform X3"/>
    <property type="match status" value="1"/>
</dbReference>
<dbReference type="Gene3D" id="2.40.70.10">
    <property type="entry name" value="Acid Proteases"/>
    <property type="match status" value="1"/>
</dbReference>
<dbReference type="InterPro" id="IPR001969">
    <property type="entry name" value="Aspartic_peptidase_AS"/>
</dbReference>
<dbReference type="InterPro" id="IPR033539">
    <property type="entry name" value="Asprv1"/>
</dbReference>
<dbReference type="InterPro" id="IPR001995">
    <property type="entry name" value="Peptidase_A2_cat"/>
</dbReference>
<dbReference type="InterPro" id="IPR021109">
    <property type="entry name" value="Peptidase_aspartic_dom_sf"/>
</dbReference>
<dbReference type="PANTHER" id="PTHR37006">
    <property type="entry name" value="RETROVIRAL-LIKE ASPARTIC PROTEASE 1"/>
    <property type="match status" value="1"/>
</dbReference>
<dbReference type="PANTHER" id="PTHR37006:SF1">
    <property type="entry name" value="RETROVIRAL-LIKE ASPARTIC PROTEASE 1"/>
    <property type="match status" value="1"/>
</dbReference>
<dbReference type="Pfam" id="PF13975">
    <property type="entry name" value="gag-asp_proteas"/>
    <property type="match status" value="1"/>
</dbReference>
<dbReference type="SUPFAM" id="SSF50630">
    <property type="entry name" value="Acid proteases"/>
    <property type="match status" value="1"/>
</dbReference>
<dbReference type="PROSITE" id="PS50175">
    <property type="entry name" value="ASP_PROT_RETROV"/>
    <property type="match status" value="1"/>
</dbReference>
<dbReference type="PROSITE" id="PS00141">
    <property type="entry name" value="ASP_PROTEASE"/>
    <property type="match status" value="1"/>
</dbReference>
<organism>
    <name type="scientific">Mus musculus</name>
    <name type="common">Mouse</name>
    <dbReference type="NCBI Taxonomy" id="10090"/>
    <lineage>
        <taxon>Eukaryota</taxon>
        <taxon>Metazoa</taxon>
        <taxon>Chordata</taxon>
        <taxon>Craniata</taxon>
        <taxon>Vertebrata</taxon>
        <taxon>Euteleostomi</taxon>
        <taxon>Mammalia</taxon>
        <taxon>Eutheria</taxon>
        <taxon>Euarchontoglires</taxon>
        <taxon>Glires</taxon>
        <taxon>Rodentia</taxon>
        <taxon>Myomorpha</taxon>
        <taxon>Muroidea</taxon>
        <taxon>Muridae</taxon>
        <taxon>Murinae</taxon>
        <taxon>Mus</taxon>
        <taxon>Mus</taxon>
    </lineage>
</organism>
<evidence type="ECO:0000250" key="1">
    <source>
        <dbReference type="UniProtKB" id="Q53RT3"/>
    </source>
</evidence>
<evidence type="ECO:0000255" key="2"/>
<evidence type="ECO:0000255" key="3">
    <source>
        <dbReference type="PROSITE-ProRule" id="PRU00275"/>
    </source>
</evidence>
<evidence type="ECO:0000255" key="4">
    <source>
        <dbReference type="PROSITE-ProRule" id="PRU10094"/>
    </source>
</evidence>
<evidence type="ECO:0000256" key="5">
    <source>
        <dbReference type="SAM" id="MobiDB-lite"/>
    </source>
</evidence>
<evidence type="ECO:0000269" key="6">
    <source>
    </source>
</evidence>
<evidence type="ECO:0000269" key="7">
    <source>
    </source>
</evidence>
<evidence type="ECO:0000303" key="8">
    <source>
    </source>
</evidence>
<evidence type="ECO:0000305" key="9"/>
<evidence type="ECO:0000312" key="10">
    <source>
        <dbReference type="EMBL" id="AAH57938.1"/>
    </source>
</evidence>
<evidence type="ECO:0000312" key="11">
    <source>
        <dbReference type="EMBL" id="AAI08358.1"/>
    </source>
</evidence>
<evidence type="ECO:0000312" key="12">
    <source>
        <dbReference type="EMBL" id="ABI23689.1"/>
    </source>
</evidence>
<evidence type="ECO:0000312" key="13">
    <source>
        <dbReference type="EMBL" id="BAB23121.2"/>
    </source>
</evidence>
<evidence type="ECO:0000312" key="14">
    <source>
        <dbReference type="MGI" id="MGI:1915105"/>
    </source>
</evidence>
<gene>
    <name evidence="14" type="primary">Asprv1</name>
    <name evidence="8" type="synonym">Sasp</name>
    <name type="synonym">Taps</name>
</gene>
<keyword id="KW-0064">Aspartyl protease</keyword>
<keyword id="KW-0068">Autocatalytic cleavage</keyword>
<keyword id="KW-0903">Direct protein sequencing</keyword>
<keyword id="KW-0325">Glycoprotein</keyword>
<keyword id="KW-0378">Hydrolase</keyword>
<keyword id="KW-0472">Membrane</keyword>
<keyword id="KW-0645">Protease</keyword>
<keyword id="KW-1185">Reference proteome</keyword>
<keyword id="KW-0812">Transmembrane</keyword>
<keyword id="KW-1133">Transmembrane helix</keyword>
<proteinExistence type="evidence at protein level"/>
<sequence>MRNPGGPGWASKRPLQKKQNTACLCAQQPARHFVPAPFNSSRQGKNTAQPTEPSLSSVIAPTLFCAFLYLACVTAELPEVSRRMATSGVRSKEGRREHAFVPEPFTGTNLAPSLWLHRFEVIDDLNHWDHATKLRFLKESLKGDALDVYNGLSSQAQGDFSFVKQALLRAFGAPGEAFSEPEEILFANSMGKGYYLKGKVGHVPVRFLVDSGAQVSVVHPALWEEVTDGDLDTLRPFNNVVKVANGAEMKILGVWDTEISLGKTKLKAEFLVANASAEEAIIGTDVLQDHNAVLDFEHRTCTLKGKKFRLLPVGSSLEDEFDLELIEEEEGSSAPEGSH</sequence>
<reference evidence="9" key="1">
    <citation type="journal article" date="2006" name="Am. J. Pathol.">
        <title>A novel aspartic proteinase-like gene expressed in stratified epithelia and squamous cell carcinoma of the skin.</title>
        <authorList>
            <person name="Rhiemeier V."/>
            <person name="Breitenbach U."/>
            <person name="Richter K.H."/>
            <person name="Gebhardt C."/>
            <person name="Vogt I."/>
            <person name="Hartenstein B."/>
            <person name="Fuerstenberger G."/>
            <person name="Mauch C."/>
            <person name="Hess J."/>
            <person name="Angel P."/>
        </authorList>
    </citation>
    <scope>NUCLEOTIDE SEQUENCE [MRNA]</scope>
    <scope>TISSUE SPECIFICITY</scope>
    <scope>INDUCTION</scope>
    <source>
        <tissue evidence="6">Skin</tissue>
    </source>
</reference>
<reference evidence="9 12" key="2">
    <citation type="journal article" date="2006" name="J. Biol. Chem.">
        <title>Mouse homologue of skin-specific retroviral-like aspartic protease involved in wrinkle formation.</title>
        <authorList>
            <person name="Matsui T."/>
            <person name="Kinoshita-Ida Y."/>
            <person name="Hayashi-Kisumi F."/>
            <person name="Hata M."/>
            <person name="Matsubara K."/>
            <person name="Chiba M."/>
            <person name="Katahira-Tayama S."/>
            <person name="Morita K."/>
            <person name="Miyachi Y."/>
            <person name="Tsukita S."/>
        </authorList>
    </citation>
    <scope>NUCLEOTIDE SEQUENCE [MRNA]</scope>
    <scope>PARTIAL PROTEIN SEQUENCE</scope>
    <scope>TISSUE SPECIFICITY</scope>
    <scope>DEVELOPMENTAL STAGE</scope>
    <scope>AUTOCATALYTIC CLEAVAGE</scope>
    <scope>MUTAGENESIS OF ASP-210</scope>
    <scope>DISRUPTION PHENOTYPE</scope>
    <source>
        <strain evidence="12">BALB/cJ</strain>
    </source>
</reference>
<reference evidence="9 10" key="3">
    <citation type="journal article" date="2004" name="Genome Res.">
        <title>The status, quality, and expansion of the NIH full-length cDNA project: the Mammalian Gene Collection (MGC).</title>
        <authorList>
            <consortium name="The MGC Project Team"/>
        </authorList>
    </citation>
    <scope>NUCLEOTIDE SEQUENCE [LARGE SCALE MRNA] OF 3-339</scope>
    <source>
        <strain evidence="11">Czech II</strain>
        <strain evidence="10">NMRI</strain>
        <tissue evidence="10">Mammary gland</tissue>
    </source>
</reference>
<reference evidence="9 13" key="4">
    <citation type="journal article" date="2005" name="Science">
        <title>The transcriptional landscape of the mammalian genome.</title>
        <authorList>
            <person name="Carninci P."/>
            <person name="Kasukawa T."/>
            <person name="Katayama S."/>
            <person name="Gough J."/>
            <person name="Frith M.C."/>
            <person name="Maeda N."/>
            <person name="Oyama R."/>
            <person name="Ravasi T."/>
            <person name="Lenhard B."/>
            <person name="Wells C."/>
            <person name="Kodzius R."/>
            <person name="Shimokawa K."/>
            <person name="Bajic V.B."/>
            <person name="Brenner S.E."/>
            <person name="Batalov S."/>
            <person name="Forrest A.R."/>
            <person name="Zavolan M."/>
            <person name="Davis M.J."/>
            <person name="Wilming L.G."/>
            <person name="Aidinis V."/>
            <person name="Allen J.E."/>
            <person name="Ambesi-Impiombato A."/>
            <person name="Apweiler R."/>
            <person name="Aturaliya R.N."/>
            <person name="Bailey T.L."/>
            <person name="Bansal M."/>
            <person name="Baxter L."/>
            <person name="Beisel K.W."/>
            <person name="Bersano T."/>
            <person name="Bono H."/>
            <person name="Chalk A.M."/>
            <person name="Chiu K.P."/>
            <person name="Choudhary V."/>
            <person name="Christoffels A."/>
            <person name="Clutterbuck D.R."/>
            <person name="Crowe M.L."/>
            <person name="Dalla E."/>
            <person name="Dalrymple B.P."/>
            <person name="de Bono B."/>
            <person name="Della Gatta G."/>
            <person name="di Bernardo D."/>
            <person name="Down T."/>
            <person name="Engstrom P."/>
            <person name="Fagiolini M."/>
            <person name="Faulkner G."/>
            <person name="Fletcher C.F."/>
            <person name="Fukushima T."/>
            <person name="Furuno M."/>
            <person name="Futaki S."/>
            <person name="Gariboldi M."/>
            <person name="Georgii-Hemming P."/>
            <person name="Gingeras T.R."/>
            <person name="Gojobori T."/>
            <person name="Green R.E."/>
            <person name="Gustincich S."/>
            <person name="Harbers M."/>
            <person name="Hayashi Y."/>
            <person name="Hensch T.K."/>
            <person name="Hirokawa N."/>
            <person name="Hill D."/>
            <person name="Huminiecki L."/>
            <person name="Iacono M."/>
            <person name="Ikeo K."/>
            <person name="Iwama A."/>
            <person name="Ishikawa T."/>
            <person name="Jakt M."/>
            <person name="Kanapin A."/>
            <person name="Katoh M."/>
            <person name="Kawasawa Y."/>
            <person name="Kelso J."/>
            <person name="Kitamura H."/>
            <person name="Kitano H."/>
            <person name="Kollias G."/>
            <person name="Krishnan S.P."/>
            <person name="Kruger A."/>
            <person name="Kummerfeld S.K."/>
            <person name="Kurochkin I.V."/>
            <person name="Lareau L.F."/>
            <person name="Lazarevic D."/>
            <person name="Lipovich L."/>
            <person name="Liu J."/>
            <person name="Liuni S."/>
            <person name="McWilliam S."/>
            <person name="Madan Babu M."/>
            <person name="Madera M."/>
            <person name="Marchionni L."/>
            <person name="Matsuda H."/>
            <person name="Matsuzawa S."/>
            <person name="Miki H."/>
            <person name="Mignone F."/>
            <person name="Miyake S."/>
            <person name="Morris K."/>
            <person name="Mottagui-Tabar S."/>
            <person name="Mulder N."/>
            <person name="Nakano N."/>
            <person name="Nakauchi H."/>
            <person name="Ng P."/>
            <person name="Nilsson R."/>
            <person name="Nishiguchi S."/>
            <person name="Nishikawa S."/>
            <person name="Nori F."/>
            <person name="Ohara O."/>
            <person name="Okazaki Y."/>
            <person name="Orlando V."/>
            <person name="Pang K.C."/>
            <person name="Pavan W.J."/>
            <person name="Pavesi G."/>
            <person name="Pesole G."/>
            <person name="Petrovsky N."/>
            <person name="Piazza S."/>
            <person name="Reed J."/>
            <person name="Reid J.F."/>
            <person name="Ring B.Z."/>
            <person name="Ringwald M."/>
            <person name="Rost B."/>
            <person name="Ruan Y."/>
            <person name="Salzberg S.L."/>
            <person name="Sandelin A."/>
            <person name="Schneider C."/>
            <person name="Schoenbach C."/>
            <person name="Sekiguchi K."/>
            <person name="Semple C.A."/>
            <person name="Seno S."/>
            <person name="Sessa L."/>
            <person name="Sheng Y."/>
            <person name="Shibata Y."/>
            <person name="Shimada H."/>
            <person name="Shimada K."/>
            <person name="Silva D."/>
            <person name="Sinclair B."/>
            <person name="Sperling S."/>
            <person name="Stupka E."/>
            <person name="Sugiura K."/>
            <person name="Sultana R."/>
            <person name="Takenaka Y."/>
            <person name="Taki K."/>
            <person name="Tammoja K."/>
            <person name="Tan S.L."/>
            <person name="Tang S."/>
            <person name="Taylor M.S."/>
            <person name="Tegner J."/>
            <person name="Teichmann S.A."/>
            <person name="Ueda H.R."/>
            <person name="van Nimwegen E."/>
            <person name="Verardo R."/>
            <person name="Wei C.L."/>
            <person name="Yagi K."/>
            <person name="Yamanishi H."/>
            <person name="Zabarovsky E."/>
            <person name="Zhu S."/>
            <person name="Zimmer A."/>
            <person name="Hide W."/>
            <person name="Bult C."/>
            <person name="Grimmond S.M."/>
            <person name="Teasdale R.D."/>
            <person name="Liu E.T."/>
            <person name="Brusic V."/>
            <person name="Quackenbush J."/>
            <person name="Wahlestedt C."/>
            <person name="Mattick J.S."/>
            <person name="Hume D.A."/>
            <person name="Kai C."/>
            <person name="Sasaki D."/>
            <person name="Tomaru Y."/>
            <person name="Fukuda S."/>
            <person name="Kanamori-Katayama M."/>
            <person name="Suzuki M."/>
            <person name="Aoki J."/>
            <person name="Arakawa T."/>
            <person name="Iida J."/>
            <person name="Imamura K."/>
            <person name="Itoh M."/>
            <person name="Kato T."/>
            <person name="Kawaji H."/>
            <person name="Kawagashira N."/>
            <person name="Kawashima T."/>
            <person name="Kojima M."/>
            <person name="Kondo S."/>
            <person name="Konno H."/>
            <person name="Nakano K."/>
            <person name="Ninomiya N."/>
            <person name="Nishio T."/>
            <person name="Okada M."/>
            <person name="Plessy C."/>
            <person name="Shibata K."/>
            <person name="Shiraki T."/>
            <person name="Suzuki S."/>
            <person name="Tagami M."/>
            <person name="Waki K."/>
            <person name="Watahiki A."/>
            <person name="Okamura-Oho Y."/>
            <person name="Suzuki H."/>
            <person name="Kawai J."/>
            <person name="Hayashizaki Y."/>
        </authorList>
    </citation>
    <scope>NUCLEOTIDE SEQUENCE [LARGE SCALE MRNA] OF 186-339</scope>
    <source>
        <strain evidence="13">C57BL/6J</strain>
        <tissue evidence="13">Embryo</tissue>
    </source>
</reference>
<accession>Q09PK2</accession>
<accession>Q0VEV3</accession>
<accession>Q32P05</accession>
<accession>Q6PEP7</accession>
<accession>Q9D135</accession>
<name>APRV1_MOUSE</name>
<comment type="function">
    <text evidence="1">Protease responsible for filaggrin processing, essential for the maintenance of a proper epidermis organization.</text>
</comment>
<comment type="subunit">
    <text evidence="7 9">Homodimer.</text>
</comment>
<comment type="subcellular location">
    <subcellularLocation>
        <location evidence="2">Membrane</location>
        <topology evidence="2">Single-pass membrane protein</topology>
    </subcellularLocation>
</comment>
<comment type="tissue specificity">
    <text evidence="6 7">Highly expressed in stratified epithelia in skin, tongue, esophagus, forestomach and vagina. Also expressed in trachea, urinary bladder and thymus. Undetectable in simple epithelia. Within the epidermis, expressed exclusively in the granular layer (at protein level). Levels are elevated in benign skin tumors but are down-regulated in squamous cell carcinomas.</text>
</comment>
<comment type="developmental stage">
    <text evidence="7">Expression is first detected at embryonic day 15.5.</text>
</comment>
<comment type="induction">
    <text evidence="6">By 12-O-tetradecanoylphorbol-13-acetate (TPA). No TPA-induced expression is seen in mice lacking Fos.</text>
</comment>
<comment type="PTM">
    <text evidence="7">Undergoes autocleavage which is necessary for activation of the protein.</text>
</comment>
<comment type="disruption phenotype">
    <text evidence="7">Mice display fine wrinkles on the lateral trunk which start to form 5 weeks after birth. There are no apparent epidermal differentiation defects.</text>
</comment>
<comment type="sequence caution" evidence="9">
    <conflict type="erroneous initiation">
        <sequence resource="EMBL-CDS" id="AAH57938"/>
    </conflict>
</comment>